<organism>
    <name type="scientific">Rattus norvegicus</name>
    <name type="common">Rat</name>
    <dbReference type="NCBI Taxonomy" id="10116"/>
    <lineage>
        <taxon>Eukaryota</taxon>
        <taxon>Metazoa</taxon>
        <taxon>Chordata</taxon>
        <taxon>Craniata</taxon>
        <taxon>Vertebrata</taxon>
        <taxon>Euteleostomi</taxon>
        <taxon>Mammalia</taxon>
        <taxon>Eutheria</taxon>
        <taxon>Euarchontoglires</taxon>
        <taxon>Glires</taxon>
        <taxon>Rodentia</taxon>
        <taxon>Myomorpha</taxon>
        <taxon>Muroidea</taxon>
        <taxon>Muridae</taxon>
        <taxon>Murinae</taxon>
        <taxon>Rattus</taxon>
    </lineage>
</organism>
<reference evidence="5" key="1">
    <citation type="journal article" date="1998" name="Biochem. Biophys. Res. Commun.">
        <title>Isolation and characterization of a cDNA for human, mouse, and rat full-length stem cell growth factor, a new member of C-type lectin superfamily.</title>
        <authorList>
            <person name="Mio H."/>
            <person name="Kagami N."/>
            <person name="Yokokawa S."/>
            <person name="Kawai H."/>
            <person name="Nakagawa S."/>
            <person name="Takeuchi K."/>
            <person name="Sekine S."/>
            <person name="Hiraoka A."/>
        </authorList>
    </citation>
    <scope>NUCLEOTIDE SEQUENCE [MRNA]</scope>
    <source>
        <tissue evidence="5">Bone</tissue>
    </source>
</reference>
<reference key="2">
    <citation type="journal article" date="2004" name="Genome Res.">
        <title>The status, quality, and expansion of the NIH full-length cDNA project: the Mammalian Gene Collection (MGC).</title>
        <authorList>
            <consortium name="The MGC Project Team"/>
        </authorList>
    </citation>
    <scope>NUCLEOTIDE SEQUENCE [LARGE SCALE MRNA]</scope>
    <source>
        <tissue>Ovary</tissue>
    </source>
</reference>
<evidence type="ECO:0000250" key="1">
    <source>
        <dbReference type="UniProtKB" id="O88200"/>
    </source>
</evidence>
<evidence type="ECO:0000250" key="2">
    <source>
        <dbReference type="UniProtKB" id="Q9Y240"/>
    </source>
</evidence>
<evidence type="ECO:0000255" key="3">
    <source>
        <dbReference type="PROSITE-ProRule" id="PRU00040"/>
    </source>
</evidence>
<evidence type="ECO:0000256" key="4">
    <source>
        <dbReference type="SAM" id="MobiDB-lite"/>
    </source>
</evidence>
<evidence type="ECO:0000312" key="5">
    <source>
        <dbReference type="EMBL" id="BAA32406.1"/>
    </source>
</evidence>
<gene>
    <name type="primary">Clec11a</name>
    <name type="synonym">Scgf</name>
</gene>
<proteinExistence type="evidence at transcript level"/>
<name>CLC11_RAT</name>
<keyword id="KW-0963">Cytoplasm</keyword>
<keyword id="KW-1015">Disulfide bond</keyword>
<keyword id="KW-0325">Glycoprotein</keyword>
<keyword id="KW-0339">Growth factor</keyword>
<keyword id="KW-0430">Lectin</keyword>
<keyword id="KW-0892">Osteogenesis</keyword>
<keyword id="KW-1185">Reference proteome</keyword>
<keyword id="KW-0964">Secreted</keyword>
<keyword id="KW-0732">Signal</keyword>
<comment type="function">
    <text evidence="1">Promotes osteogenesis by stimulating the differentiation of mesenchymal progenitors into mature osteoblasts. Important for repair and maintenance of adult bone.</text>
</comment>
<comment type="subcellular location">
    <subcellularLocation>
        <location evidence="2">Cytoplasm</location>
    </subcellularLocation>
    <subcellularLocation>
        <location evidence="2">Secreted</location>
    </subcellularLocation>
</comment>
<comment type="PTM">
    <text evidence="2">O-glycosylated. Probably sulfated on the O-glycans.</text>
</comment>
<protein>
    <recommendedName>
        <fullName>C-type lectin domain family 11 member A</fullName>
    </recommendedName>
    <alternativeName>
        <fullName>Lymphocyte secreted C-type lectin</fullName>
    </alternativeName>
    <alternativeName>
        <fullName evidence="1">Osteolectin</fullName>
    </alternativeName>
    <alternativeName>
        <fullName>Stem cell growth factor</fullName>
    </alternativeName>
</protein>
<sequence>MQAAWLLGALLVPHLLSFGHGARGHGKEWEGVWGGALEEERDRESLMLKNLQEALGLPTGVGNKDNLAENSEGKEVWEATETQGEEEEEETTTTPSSSPTPFPSPSPTSEDTVTYILGRLASLDAGLHQLHIRLHVLDTRVVELTQGLRRLRDAASDTRDSVQALKEVQVRSEQEHGRLEGCLKGLRLGHKCFLLSRDFETQAAAQARCKARGGSLAQPADRQQMDALSRYLRAALAPYNWPVWLGVHDRRSEGLYLFENGQRVSFFAWHRALSPESGAQPSAASHPLSPDQPNGGILENCVAQASDDGSWWDHDCERRLYFVCEFPF</sequence>
<accession>O88201</accession>
<accession>Q5EAN4</accession>
<dbReference type="EMBL" id="AB009246">
    <property type="protein sequence ID" value="BAA32406.1"/>
    <property type="molecule type" value="mRNA"/>
</dbReference>
<dbReference type="EMBL" id="BC090344">
    <property type="protein sequence ID" value="AAH90344.1"/>
    <property type="molecule type" value="mRNA"/>
</dbReference>
<dbReference type="RefSeq" id="NP_001012477.1">
    <property type="nucleotide sequence ID" value="NM_001012459.1"/>
</dbReference>
<dbReference type="SMR" id="O88201"/>
<dbReference type="FunCoup" id="O88201">
    <property type="interactions" value="12"/>
</dbReference>
<dbReference type="STRING" id="10116.ENSRNOP00000025949"/>
<dbReference type="PhosphoSitePlus" id="O88201"/>
<dbReference type="PaxDb" id="10116-ENSRNOP00000025949"/>
<dbReference type="Ensembl" id="ENSRNOT00000025949.7">
    <property type="protein sequence ID" value="ENSRNOP00000025949.3"/>
    <property type="gene ID" value="ENSRNOG00000019138.7"/>
</dbReference>
<dbReference type="GeneID" id="29313"/>
<dbReference type="KEGG" id="rno:29313"/>
<dbReference type="UCSC" id="RGD:3627">
    <property type="organism name" value="rat"/>
</dbReference>
<dbReference type="AGR" id="RGD:3627"/>
<dbReference type="CTD" id="6320"/>
<dbReference type="RGD" id="3627">
    <property type="gene designation" value="Clec11a"/>
</dbReference>
<dbReference type="eggNOG" id="KOG4297">
    <property type="taxonomic scope" value="Eukaryota"/>
</dbReference>
<dbReference type="GeneTree" id="ENSGT00950000183186"/>
<dbReference type="HOGENOM" id="CLU_074832_0_0_1"/>
<dbReference type="InParanoid" id="O88201"/>
<dbReference type="OMA" id="EMTDQED"/>
<dbReference type="OrthoDB" id="441660at2759"/>
<dbReference type="PhylomeDB" id="O88201"/>
<dbReference type="TreeFam" id="TF330481"/>
<dbReference type="PRO" id="PR:O88201"/>
<dbReference type="Proteomes" id="UP000002494">
    <property type="component" value="Chromosome 1"/>
</dbReference>
<dbReference type="Bgee" id="ENSRNOG00000019138">
    <property type="expression patterns" value="Expressed in quadriceps femoris and 18 other cell types or tissues"/>
</dbReference>
<dbReference type="GO" id="GO:0005737">
    <property type="term" value="C:cytoplasm"/>
    <property type="evidence" value="ECO:0007669"/>
    <property type="project" value="UniProtKB-SubCell"/>
</dbReference>
<dbReference type="GO" id="GO:0005576">
    <property type="term" value="C:extracellular region"/>
    <property type="evidence" value="ECO:0000250"/>
    <property type="project" value="UniProtKB"/>
</dbReference>
<dbReference type="GO" id="GO:0005615">
    <property type="term" value="C:extracellular space"/>
    <property type="evidence" value="ECO:0000318"/>
    <property type="project" value="GO_Central"/>
</dbReference>
<dbReference type="GO" id="GO:0030246">
    <property type="term" value="F:carbohydrate binding"/>
    <property type="evidence" value="ECO:0000303"/>
    <property type="project" value="UniProtKB"/>
</dbReference>
<dbReference type="GO" id="GO:0008083">
    <property type="term" value="F:growth factor activity"/>
    <property type="evidence" value="ECO:0000250"/>
    <property type="project" value="UniProtKB"/>
</dbReference>
<dbReference type="GO" id="GO:0001503">
    <property type="term" value="P:ossification"/>
    <property type="evidence" value="ECO:0000318"/>
    <property type="project" value="GO_Central"/>
</dbReference>
<dbReference type="GO" id="GO:0008284">
    <property type="term" value="P:positive regulation of cell population proliferation"/>
    <property type="evidence" value="ECO:0000250"/>
    <property type="project" value="UniProtKB"/>
</dbReference>
<dbReference type="FunFam" id="3.10.100.10:FF:000054">
    <property type="entry name" value="C-type lectin domain family 11 member A"/>
    <property type="match status" value="1"/>
</dbReference>
<dbReference type="Gene3D" id="3.10.100.10">
    <property type="entry name" value="Mannose-Binding Protein A, subunit A"/>
    <property type="match status" value="1"/>
</dbReference>
<dbReference type="InterPro" id="IPR001304">
    <property type="entry name" value="C-type_lectin-like"/>
</dbReference>
<dbReference type="InterPro" id="IPR016186">
    <property type="entry name" value="C-type_lectin-like/link_sf"/>
</dbReference>
<dbReference type="InterPro" id="IPR018378">
    <property type="entry name" value="C-type_lectin_CS"/>
</dbReference>
<dbReference type="InterPro" id="IPR051663">
    <property type="entry name" value="CLec_Tetranectin-domain"/>
</dbReference>
<dbReference type="InterPro" id="IPR016187">
    <property type="entry name" value="CTDL_fold"/>
</dbReference>
<dbReference type="PANTHER" id="PTHR22799:SF1">
    <property type="entry name" value="C-TYPE LECTIN DOMAIN FAMILY 11 MEMBER A"/>
    <property type="match status" value="1"/>
</dbReference>
<dbReference type="PANTHER" id="PTHR22799">
    <property type="entry name" value="TETRANECTIN-RELATED"/>
    <property type="match status" value="1"/>
</dbReference>
<dbReference type="Pfam" id="PF00059">
    <property type="entry name" value="Lectin_C"/>
    <property type="match status" value="1"/>
</dbReference>
<dbReference type="SMART" id="SM00034">
    <property type="entry name" value="CLECT"/>
    <property type="match status" value="1"/>
</dbReference>
<dbReference type="SUPFAM" id="SSF56436">
    <property type="entry name" value="C-type lectin-like"/>
    <property type="match status" value="1"/>
</dbReference>
<dbReference type="PROSITE" id="PS00615">
    <property type="entry name" value="C_TYPE_LECTIN_1"/>
    <property type="match status" value="1"/>
</dbReference>
<dbReference type="PROSITE" id="PS50041">
    <property type="entry name" value="C_TYPE_LECTIN_2"/>
    <property type="match status" value="1"/>
</dbReference>
<feature type="signal peptide" evidence="2">
    <location>
        <begin position="1"/>
        <end position="21"/>
    </location>
</feature>
<feature type="chain" id="PRO_0000017470" description="C-type lectin domain family 11 member A">
    <location>
        <begin position="22"/>
        <end position="328"/>
    </location>
</feature>
<feature type="domain" description="C-type lectin" evidence="3">
    <location>
        <begin position="188"/>
        <end position="325"/>
    </location>
</feature>
<feature type="region of interest" description="Disordered" evidence="4">
    <location>
        <begin position="58"/>
        <end position="111"/>
    </location>
</feature>
<feature type="disulfide bond" evidence="3">
    <location>
        <begin position="209"/>
        <end position="324"/>
    </location>
</feature>
<feature type="disulfide bond" evidence="3">
    <location>
        <begin position="301"/>
        <end position="316"/>
    </location>
</feature>